<reference key="1">
    <citation type="journal article" date="1999" name="Virology">
        <title>Sequence and analysis of the genome of a baculovirus pathogenic for Lymantria dispar.</title>
        <authorList>
            <person name="Kuzio J."/>
            <person name="Pearson M.N."/>
            <person name="Harwood S.H."/>
            <person name="Funk C.J."/>
            <person name="Evans J.T."/>
            <person name="Slavicek J.M."/>
            <person name="Rohrmann G.F."/>
        </authorList>
    </citation>
    <scope>NUCLEOTIDE SEQUENCE [GENOMIC DNA]</scope>
</reference>
<reference key="2">
    <citation type="journal article" date="2000" name="J. Virol.">
        <title>Identification of the lymantria dispar nucleopolyhedrovirus envelope fusion protein provides evidence for a phylogenetic division of the Baculoviridae.</title>
        <authorList>
            <person name="Pearson M.N."/>
            <person name="Groten C."/>
            <person name="Rohrmann G.F."/>
        </authorList>
    </citation>
    <scope>IDENTIFICATION</scope>
    <scope>FUNCTION</scope>
</reference>
<feature type="signal peptide" evidence="1">
    <location>
        <begin position="1"/>
        <end position="16"/>
    </location>
</feature>
<feature type="chain" id="PRO_0000406911" description="Envelope fusion protein">
    <location>
        <begin position="17"/>
        <end position="676"/>
    </location>
</feature>
<feature type="transmembrane region" description="Helical" evidence="1">
    <location>
        <begin position="577"/>
        <end position="597"/>
    </location>
</feature>
<feature type="coiled-coil region" evidence="1">
    <location>
        <begin position="169"/>
        <end position="215"/>
    </location>
</feature>
<feature type="glycosylation site" description="N-linked (GlcNAc...) asparagine; by host" evidence="1">
    <location>
        <position position="76"/>
    </location>
</feature>
<feature type="glycosylation site" description="N-linked (GlcNAc...) asparagine; by host" evidence="1">
    <location>
        <position position="87"/>
    </location>
</feature>
<feature type="glycosylation site" description="N-linked (GlcNAc...) asparagine; by host" evidence="1">
    <location>
        <position position="266"/>
    </location>
</feature>
<feature type="glycosylation site" description="N-linked (GlcNAc...) asparagine; by host" evidence="1">
    <location>
        <position position="469"/>
    </location>
</feature>
<feature type="glycosylation site" description="N-linked (GlcNAc...) asparagine; by host" evidence="1">
    <location>
        <position position="505"/>
    </location>
</feature>
<feature type="glycosylation site" description="N-linked (GlcNAc...) asparagine; by host" evidence="1">
    <location>
        <position position="548"/>
    </location>
</feature>
<feature type="glycosylation site" description="N-linked (GlcNAc...) asparagine; by host" evidence="1">
    <location>
        <position position="628"/>
    </location>
</feature>
<proteinExistence type="inferred from homology"/>
<dbReference type="EMBL" id="AF081810">
    <property type="protein sequence ID" value="AAC70316.1"/>
    <property type="molecule type" value="Genomic_DNA"/>
</dbReference>
<dbReference type="PIR" id="T30480">
    <property type="entry name" value="T30480"/>
</dbReference>
<dbReference type="RefSeq" id="NP_047767.1">
    <property type="nucleotide sequence ID" value="NC_001973.1"/>
</dbReference>
<dbReference type="KEGG" id="vg:1488571"/>
<dbReference type="OrthoDB" id="3109at10239"/>
<dbReference type="Proteomes" id="UP000203997">
    <property type="component" value="Genome"/>
</dbReference>
<dbReference type="GO" id="GO:0020002">
    <property type="term" value="C:host cell plasma membrane"/>
    <property type="evidence" value="ECO:0007669"/>
    <property type="project" value="UniProtKB-SubCell"/>
</dbReference>
<dbReference type="GO" id="GO:0016020">
    <property type="term" value="C:membrane"/>
    <property type="evidence" value="ECO:0007669"/>
    <property type="project" value="UniProtKB-KW"/>
</dbReference>
<dbReference type="GO" id="GO:0019031">
    <property type="term" value="C:viral envelope"/>
    <property type="evidence" value="ECO:0007669"/>
    <property type="project" value="UniProtKB-KW"/>
</dbReference>
<dbReference type="GO" id="GO:0055036">
    <property type="term" value="C:virion membrane"/>
    <property type="evidence" value="ECO:0007669"/>
    <property type="project" value="UniProtKB-SubCell"/>
</dbReference>
<dbReference type="GO" id="GO:0039654">
    <property type="term" value="P:fusion of virus membrane with host endosome membrane"/>
    <property type="evidence" value="ECO:0007669"/>
    <property type="project" value="UniProtKB-KW"/>
</dbReference>
<dbReference type="GO" id="GO:0046718">
    <property type="term" value="P:symbiont entry into host cell"/>
    <property type="evidence" value="ECO:0007669"/>
    <property type="project" value="UniProtKB-KW"/>
</dbReference>
<dbReference type="InterPro" id="IPR022048">
    <property type="entry name" value="Envelope_fusion-like"/>
</dbReference>
<dbReference type="Pfam" id="PF12259">
    <property type="entry name" value="Baculo_F"/>
    <property type="match status" value="1"/>
</dbReference>
<comment type="function">
    <text evidence="2">Envelope glycoprotein which mediates the fusion of viral and host endosomal membranes leading to virus entry into the host cell.</text>
</comment>
<comment type="subcellular location">
    <subcellularLocation>
        <location evidence="3">Virion membrane</location>
        <topology evidence="3">Single-pass membrane protein</topology>
    </subcellularLocation>
    <subcellularLocation>
        <location evidence="3">Host cell membrane</location>
        <topology evidence="3">Single-pass membrane protein</topology>
    </subcellularLocation>
</comment>
<comment type="PTM">
    <text>N-glycosylated.</text>
</comment>
<accession>Q9YMJ7</accession>
<evidence type="ECO:0000255" key="1"/>
<evidence type="ECO:0000269" key="2">
    <source>
    </source>
</evidence>
<evidence type="ECO:0000305" key="3"/>
<protein>
    <recommendedName>
        <fullName>Envelope fusion protein</fullName>
    </recommendedName>
</protein>
<organismHost>
    <name type="scientific">Lepidoptera</name>
    <name type="common">butterflies and moths</name>
    <dbReference type="NCBI Taxonomy" id="7088"/>
</organismHost>
<keyword id="KW-0175">Coiled coil</keyword>
<keyword id="KW-1170">Fusion of virus membrane with host endosomal membrane</keyword>
<keyword id="KW-1168">Fusion of virus membrane with host membrane</keyword>
<keyword id="KW-0325">Glycoprotein</keyword>
<keyword id="KW-1032">Host cell membrane</keyword>
<keyword id="KW-1043">Host membrane</keyword>
<keyword id="KW-0472">Membrane</keyword>
<keyword id="KW-1185">Reference proteome</keyword>
<keyword id="KW-0732">Signal</keyword>
<keyword id="KW-0812">Transmembrane</keyword>
<keyword id="KW-1133">Transmembrane helix</keyword>
<keyword id="KW-0261">Viral envelope protein</keyword>
<keyword id="KW-1162">Viral penetration into host cytoplasm</keyword>
<keyword id="KW-0946">Virion</keyword>
<keyword id="KW-1160">Virus entry into host cell</keyword>
<gene>
    <name type="ordered locus">LdOrf-130</name>
</gene>
<name>ENV_NPVLD</name>
<organism>
    <name type="scientific">Lymantria dispar multicapsid nuclear polyhedrosis virus</name>
    <name type="common">LdMNPV</name>
    <dbReference type="NCBI Taxonomy" id="10449"/>
    <lineage>
        <taxon>Viruses</taxon>
        <taxon>Viruses incertae sedis</taxon>
        <taxon>Naldaviricetes</taxon>
        <taxon>Lefavirales</taxon>
        <taxon>Baculoviridae</taxon>
        <taxon>Alphabaculovirus</taxon>
        <taxon>Alphabaculovirus lydisparis</taxon>
    </lineage>
</organism>
<sequence length="676" mass="76738">MSPLALIVLLAWHATAFKSTDTIEVIPLPHTSGFYYQPINRMQFVEDVWHFIIEVDHGVIFQELDELYRDTLHLLNHTRSSKFVSANCTTNAIIESEINTYILKRILYLVQQHNTIDDKIKANAEGDAPDSRWELNTKDPLAPRRKRGVLNFVGTVDKFLFGVMDSNDARELHDLAKTSNALNEQIKEVTDELVNIAKFEEHKQCLERQRDDLCGYATAKMALITEQLTQLDLLYTNLDRAVDDALDNRINSLIMTPQRLYEEMTNVTVHVPTKLTWPVPLKKTNMHDLINDKIVKTHVFKLERRKLIFILEVPLIDDQNYDVYQVIPIPLCGGDGKCAVIVPDSKYLGVSTNKRNYVRLEDDAPKACKMTSKNLLCFKPKVVHVSSEATLCDIKILLHYENSYENVQRDCDVRVGKFDPEIFHLISDYNNWLYVLQRDTELTMDCADASSASNVIRIAAGTGIIRGRNVTRSCNLMTKSKQLALHQLKNSLFSVSAVPLSTSFNLSAALGDLDRLEIESMKNNADLDHKHLQGATQRLIDLRKRMNNNSVFHGAELEGEASDGWFCWLVGWLNIKCATAEAVVACVVLFLVALLLFRIYRFCCPGTCSAMFSCCRFDALSSVPRRRNKTKSSVIRVNSQLQYLDGGGGGEKSHEETPMVMFNNRARDPNVVFKNI</sequence>